<reference key="1">
    <citation type="journal article" date="2007" name="PLoS Genet.">
        <title>The complete genome sequence of Yersinia pseudotuberculosis IP31758, the causative agent of Far East scarlet-like fever.</title>
        <authorList>
            <person name="Eppinger M."/>
            <person name="Rosovitz M.J."/>
            <person name="Fricke W.F."/>
            <person name="Rasko D.A."/>
            <person name="Kokorina G."/>
            <person name="Fayolle C."/>
            <person name="Lindler L.E."/>
            <person name="Carniel E."/>
            <person name="Ravel J."/>
        </authorList>
    </citation>
    <scope>NUCLEOTIDE SEQUENCE [LARGE SCALE GENOMIC DNA]</scope>
    <source>
        <strain>IP 31758</strain>
    </source>
</reference>
<sequence>MAQANLSEILFKPKFKHPETSTLVRRTHCNHVVNIHSALDGDTANHWYRMINRLMWTWRGIDPLEIEEVLSRIACSKAEHSNNELLDTVVGYRNGNWIYEWANQGMMWQQKAMEETDPGSAGQFWLNAANLYSIASYPHLKGDELSEQAEVLSNRAYEEAAKYLPYTLKELTFPISDGGSLSGFLHMPTVGSAPFPTVLMCGGLDTLQSDYHRLFRDYLEPKGIAMLTIDLPSVGASSRWKLTQDTSYLHQQVLQALADVPWVDHQRVSVFGFRFGANVAVRLGYLEPQRVRAVACLGPIVHHLLCNSDSLRKVPDMYMDVMASRLGMADSTDETLNTEMNRYSLKTQGLLGRRCQTPMLAGFWENDPFSPKEEAKLICSSSADGKLLAIPSKPLYENFHRALLQTSEWLEDKMR</sequence>
<dbReference type="EC" id="3.1.1.1" evidence="1"/>
<dbReference type="EMBL" id="CP000720">
    <property type="protein sequence ID" value="ABS48776.1"/>
    <property type="molecule type" value="Genomic_DNA"/>
</dbReference>
<dbReference type="RefSeq" id="WP_002208703.1">
    <property type="nucleotide sequence ID" value="NC_009708.1"/>
</dbReference>
<dbReference type="SMR" id="A7FLI4"/>
<dbReference type="ESTHER" id="yerpe-y3224">
    <property type="family name" value="Duf_1100-R"/>
</dbReference>
<dbReference type="GeneID" id="57975494"/>
<dbReference type="KEGG" id="ypi:YpsIP31758_3152"/>
<dbReference type="HOGENOM" id="CLU_036819_0_0_6"/>
<dbReference type="Proteomes" id="UP000002412">
    <property type="component" value="Chromosome"/>
</dbReference>
<dbReference type="GO" id="GO:0106435">
    <property type="term" value="F:carboxylesterase activity"/>
    <property type="evidence" value="ECO:0007669"/>
    <property type="project" value="UniProtKB-EC"/>
</dbReference>
<dbReference type="FunFam" id="3.40.50.1820:FF:000022">
    <property type="entry name" value="Esterase FrsA"/>
    <property type="match status" value="1"/>
</dbReference>
<dbReference type="Gene3D" id="3.40.50.1820">
    <property type="entry name" value="alpha/beta hydrolase"/>
    <property type="match status" value="1"/>
</dbReference>
<dbReference type="HAMAP" id="MF_01063">
    <property type="entry name" value="FrsA"/>
    <property type="match status" value="1"/>
</dbReference>
<dbReference type="InterPro" id="IPR029058">
    <property type="entry name" value="AB_hydrolase_fold"/>
</dbReference>
<dbReference type="InterPro" id="IPR043423">
    <property type="entry name" value="FrsA"/>
</dbReference>
<dbReference type="InterPro" id="IPR010520">
    <property type="entry name" value="FrsA-like"/>
</dbReference>
<dbReference type="InterPro" id="IPR050261">
    <property type="entry name" value="FrsA_esterase"/>
</dbReference>
<dbReference type="NCBIfam" id="NF003460">
    <property type="entry name" value="PRK05077.1"/>
    <property type="match status" value="1"/>
</dbReference>
<dbReference type="PANTHER" id="PTHR22946">
    <property type="entry name" value="DIENELACTONE HYDROLASE DOMAIN-CONTAINING PROTEIN-RELATED"/>
    <property type="match status" value="1"/>
</dbReference>
<dbReference type="PANTHER" id="PTHR22946:SF4">
    <property type="entry name" value="ESTERASE FRSA"/>
    <property type="match status" value="1"/>
</dbReference>
<dbReference type="Pfam" id="PF06500">
    <property type="entry name" value="FrsA-like"/>
    <property type="match status" value="1"/>
</dbReference>
<dbReference type="SUPFAM" id="SSF53474">
    <property type="entry name" value="alpha/beta-Hydrolases"/>
    <property type="match status" value="1"/>
</dbReference>
<organism>
    <name type="scientific">Yersinia pseudotuberculosis serotype O:1b (strain IP 31758)</name>
    <dbReference type="NCBI Taxonomy" id="349747"/>
    <lineage>
        <taxon>Bacteria</taxon>
        <taxon>Pseudomonadati</taxon>
        <taxon>Pseudomonadota</taxon>
        <taxon>Gammaproteobacteria</taxon>
        <taxon>Enterobacterales</taxon>
        <taxon>Yersiniaceae</taxon>
        <taxon>Yersinia</taxon>
    </lineage>
</organism>
<evidence type="ECO:0000255" key="1">
    <source>
        <dbReference type="HAMAP-Rule" id="MF_01063"/>
    </source>
</evidence>
<proteinExistence type="inferred from homology"/>
<feature type="chain" id="PRO_1000064493" description="Esterase FrsA">
    <location>
        <begin position="1"/>
        <end position="415"/>
    </location>
</feature>
<accession>A7FLI4</accession>
<protein>
    <recommendedName>
        <fullName evidence="1">Esterase FrsA</fullName>
        <ecNumber evidence="1">3.1.1.1</ecNumber>
    </recommendedName>
</protein>
<gene>
    <name evidence="1" type="primary">frsA</name>
    <name type="ordered locus">YpsIP31758_3152</name>
</gene>
<comment type="function">
    <text evidence="1">Catalyzes the hydrolysis of esters.</text>
</comment>
<comment type="catalytic activity">
    <reaction evidence="1">
        <text>a carboxylic ester + H2O = an alcohol + a carboxylate + H(+)</text>
        <dbReference type="Rhea" id="RHEA:21164"/>
        <dbReference type="ChEBI" id="CHEBI:15377"/>
        <dbReference type="ChEBI" id="CHEBI:15378"/>
        <dbReference type="ChEBI" id="CHEBI:29067"/>
        <dbReference type="ChEBI" id="CHEBI:30879"/>
        <dbReference type="ChEBI" id="CHEBI:33308"/>
        <dbReference type="EC" id="3.1.1.1"/>
    </reaction>
</comment>
<comment type="similarity">
    <text evidence="1">Belongs to the FrsA family.</text>
</comment>
<keyword id="KW-0378">Hydrolase</keyword>
<keyword id="KW-0719">Serine esterase</keyword>
<name>FRSA_YERP3</name>